<keyword id="KW-0021">Allosteric enzyme</keyword>
<keyword id="KW-0963">Cytoplasm</keyword>
<keyword id="KW-0378">Hydrolase</keyword>
<keyword id="KW-0479">Metal-binding</keyword>
<keyword id="KW-0645">Protease</keyword>
<keyword id="KW-1185">Reference proteome</keyword>
<keyword id="KW-0915">Sodium</keyword>
<keyword id="KW-0888">Threonine protease</keyword>
<protein>
    <recommendedName>
        <fullName evidence="1">ATP-dependent protease subunit HslV</fullName>
        <ecNumber evidence="1">3.4.25.2</ecNumber>
    </recommendedName>
</protein>
<dbReference type="EC" id="3.4.25.2" evidence="1"/>
<dbReference type="EMBL" id="CP000860">
    <property type="protein sequence ID" value="ACA59137.1"/>
    <property type="molecule type" value="Genomic_DNA"/>
</dbReference>
<dbReference type="RefSeq" id="WP_012301725.1">
    <property type="nucleotide sequence ID" value="NC_010424.1"/>
</dbReference>
<dbReference type="SMR" id="B1I260"/>
<dbReference type="STRING" id="477974.Daud_0603"/>
<dbReference type="MEROPS" id="T01.007"/>
<dbReference type="KEGG" id="dau:Daud_0603"/>
<dbReference type="eggNOG" id="COG5405">
    <property type="taxonomic scope" value="Bacteria"/>
</dbReference>
<dbReference type="HOGENOM" id="CLU_093872_1_0_9"/>
<dbReference type="OrthoDB" id="9804884at2"/>
<dbReference type="Proteomes" id="UP000008544">
    <property type="component" value="Chromosome"/>
</dbReference>
<dbReference type="GO" id="GO:0009376">
    <property type="term" value="C:HslUV protease complex"/>
    <property type="evidence" value="ECO:0007669"/>
    <property type="project" value="UniProtKB-UniRule"/>
</dbReference>
<dbReference type="GO" id="GO:0005839">
    <property type="term" value="C:proteasome core complex"/>
    <property type="evidence" value="ECO:0007669"/>
    <property type="project" value="InterPro"/>
</dbReference>
<dbReference type="GO" id="GO:0046872">
    <property type="term" value="F:metal ion binding"/>
    <property type="evidence" value="ECO:0007669"/>
    <property type="project" value="UniProtKB-KW"/>
</dbReference>
<dbReference type="GO" id="GO:0004298">
    <property type="term" value="F:threonine-type endopeptidase activity"/>
    <property type="evidence" value="ECO:0007669"/>
    <property type="project" value="UniProtKB-KW"/>
</dbReference>
<dbReference type="GO" id="GO:0051603">
    <property type="term" value="P:proteolysis involved in protein catabolic process"/>
    <property type="evidence" value="ECO:0007669"/>
    <property type="project" value="InterPro"/>
</dbReference>
<dbReference type="Gene3D" id="3.60.20.10">
    <property type="entry name" value="Glutamine Phosphoribosylpyrophosphate, subunit 1, domain 1"/>
    <property type="match status" value="1"/>
</dbReference>
<dbReference type="HAMAP" id="MF_00248">
    <property type="entry name" value="HslV"/>
    <property type="match status" value="1"/>
</dbReference>
<dbReference type="InterPro" id="IPR022281">
    <property type="entry name" value="ATP-dep_Prtase_HsIV_su"/>
</dbReference>
<dbReference type="InterPro" id="IPR029055">
    <property type="entry name" value="Ntn_hydrolases_N"/>
</dbReference>
<dbReference type="InterPro" id="IPR001353">
    <property type="entry name" value="Proteasome_sua/b"/>
</dbReference>
<dbReference type="InterPro" id="IPR023333">
    <property type="entry name" value="Proteasome_suB-type"/>
</dbReference>
<dbReference type="NCBIfam" id="TIGR03692">
    <property type="entry name" value="ATP_dep_HslV"/>
    <property type="match status" value="1"/>
</dbReference>
<dbReference type="NCBIfam" id="NF003964">
    <property type="entry name" value="PRK05456.1"/>
    <property type="match status" value="1"/>
</dbReference>
<dbReference type="PANTHER" id="PTHR32194:SF0">
    <property type="entry name" value="ATP-DEPENDENT PROTEASE SUBUNIT HSLV"/>
    <property type="match status" value="1"/>
</dbReference>
<dbReference type="PANTHER" id="PTHR32194">
    <property type="entry name" value="METALLOPROTEASE TLDD"/>
    <property type="match status" value="1"/>
</dbReference>
<dbReference type="Pfam" id="PF00227">
    <property type="entry name" value="Proteasome"/>
    <property type="match status" value="1"/>
</dbReference>
<dbReference type="PIRSF" id="PIRSF039093">
    <property type="entry name" value="HslV"/>
    <property type="match status" value="1"/>
</dbReference>
<dbReference type="SUPFAM" id="SSF56235">
    <property type="entry name" value="N-terminal nucleophile aminohydrolases (Ntn hydrolases)"/>
    <property type="match status" value="1"/>
</dbReference>
<dbReference type="PROSITE" id="PS51476">
    <property type="entry name" value="PROTEASOME_BETA_2"/>
    <property type="match status" value="1"/>
</dbReference>
<organism>
    <name type="scientific">Desulforudis audaxviator (strain MP104C)</name>
    <dbReference type="NCBI Taxonomy" id="477974"/>
    <lineage>
        <taxon>Bacteria</taxon>
        <taxon>Bacillati</taxon>
        <taxon>Bacillota</taxon>
        <taxon>Clostridia</taxon>
        <taxon>Thermoanaerobacterales</taxon>
        <taxon>Candidatus Desulforudaceae</taxon>
        <taxon>Candidatus Desulforudis</taxon>
    </lineage>
</organism>
<reference key="1">
    <citation type="submission" date="2007-10" db="EMBL/GenBank/DDBJ databases">
        <title>Complete sequence of chromosome of Desulforudis audaxviator MP104C.</title>
        <authorList>
            <person name="Copeland A."/>
            <person name="Lucas S."/>
            <person name="Lapidus A."/>
            <person name="Barry K."/>
            <person name="Glavina del Rio T."/>
            <person name="Dalin E."/>
            <person name="Tice H."/>
            <person name="Bruce D."/>
            <person name="Pitluck S."/>
            <person name="Lowry S.R."/>
            <person name="Larimer F."/>
            <person name="Land M.L."/>
            <person name="Hauser L."/>
            <person name="Kyrpides N."/>
            <person name="Ivanova N.N."/>
            <person name="Richardson P."/>
        </authorList>
    </citation>
    <scope>NUCLEOTIDE SEQUENCE [LARGE SCALE GENOMIC DNA]</scope>
    <source>
        <strain>MP104C</strain>
    </source>
</reference>
<sequence length="177" mass="18821">MTFKGTTIVAVKRDGAVALAGDGQVGLGNGIIVKRDAVKLRRLYKDRVVAGFAGSVADAFALFERFEGKLEESQGNLRRAAVQLAKDWRTDKYLRRLEALLVVADREAVLLISGGGEVIEPDDGIIAVGSGGAFALAAARALARHTALPAVDIAREALQIASQICVHTNDRITVEQV</sequence>
<gene>
    <name evidence="1" type="primary">hslV</name>
    <name type="ordered locus">Daud_0603</name>
</gene>
<proteinExistence type="inferred from homology"/>
<name>HSLV_DESAP</name>
<evidence type="ECO:0000255" key="1">
    <source>
        <dbReference type="HAMAP-Rule" id="MF_00248"/>
    </source>
</evidence>
<feature type="chain" id="PRO_1000100889" description="ATP-dependent protease subunit HslV">
    <location>
        <begin position="1"/>
        <end position="177"/>
    </location>
</feature>
<feature type="active site" evidence="1">
    <location>
        <position position="6"/>
    </location>
</feature>
<feature type="binding site" evidence="1">
    <location>
        <position position="162"/>
    </location>
    <ligand>
        <name>Na(+)</name>
        <dbReference type="ChEBI" id="CHEBI:29101"/>
    </ligand>
</feature>
<feature type="binding site" evidence="1">
    <location>
        <position position="165"/>
    </location>
    <ligand>
        <name>Na(+)</name>
        <dbReference type="ChEBI" id="CHEBI:29101"/>
    </ligand>
</feature>
<feature type="binding site" evidence="1">
    <location>
        <position position="168"/>
    </location>
    <ligand>
        <name>Na(+)</name>
        <dbReference type="ChEBI" id="CHEBI:29101"/>
    </ligand>
</feature>
<accession>B1I260</accession>
<comment type="function">
    <text evidence="1">Protease subunit of a proteasome-like degradation complex believed to be a general protein degrading machinery.</text>
</comment>
<comment type="catalytic activity">
    <reaction evidence="1">
        <text>ATP-dependent cleavage of peptide bonds with broad specificity.</text>
        <dbReference type="EC" id="3.4.25.2"/>
    </reaction>
</comment>
<comment type="activity regulation">
    <text evidence="1">Allosterically activated by HslU binding.</text>
</comment>
<comment type="subunit">
    <text evidence="1">A double ring-shaped homohexamer of HslV is capped on each side by a ring-shaped HslU homohexamer. The assembly of the HslU/HslV complex is dependent on binding of ATP.</text>
</comment>
<comment type="subcellular location">
    <subcellularLocation>
        <location evidence="1">Cytoplasm</location>
    </subcellularLocation>
</comment>
<comment type="similarity">
    <text evidence="1">Belongs to the peptidase T1B family. HslV subfamily.</text>
</comment>